<sequence length="454" mass="49363">MASVWVRDALSGRLQLVRVAPGAVALDLLYQEGTAIPLTDFYVKCNGHLADLEEKLQDGHTYSIEPRLCGGKGGFGSMLRALGAQIEKTTNREACRDLSGRRLRDVNHEKAMAEWTKKQADREAEKEQRRLERLQRKLAEPKHYFTDPEYHKQCHDMSERLEEAVIKGLQASSSDVVSAESDDTRKRKKDMYASKGTSSKKKCFWTGLEGLEASSSSDSSSDSDLDESPCSSSSGSKHHEYIKERLGSPESSSSSDGLEEASSAGSHQMLKGQTSGSESDNILEGPSSSAGSLHVPQLQSSSKGTEHIQEPQTCPAESEQNTETPNISDGSEENPTTVTNSECKSVTSAANTGQNEQILDDGHKFASPTLLEPKSELQQSSNTEPSSIDLVAYKTVAELEALGLEKLKLELVALGLKCGGTLQERAARLFSVRGLARDQIDPSLFAKPAKAKKK</sequence>
<protein>
    <recommendedName>
        <fullName evidence="5">Splicing regulator SDE2</fullName>
    </recommendedName>
    <alternativeName>
        <fullName evidence="5">Replication stress response regulator SDE2</fullName>
    </alternativeName>
</protein>
<proteinExistence type="evidence at transcript level"/>
<organism>
    <name type="scientific">Xenopus laevis</name>
    <name type="common">African clawed frog</name>
    <dbReference type="NCBI Taxonomy" id="8355"/>
    <lineage>
        <taxon>Eukaryota</taxon>
        <taxon>Metazoa</taxon>
        <taxon>Chordata</taxon>
        <taxon>Craniata</taxon>
        <taxon>Vertebrata</taxon>
        <taxon>Euteleostomi</taxon>
        <taxon>Amphibia</taxon>
        <taxon>Batrachia</taxon>
        <taxon>Anura</taxon>
        <taxon>Pipoidea</taxon>
        <taxon>Pipidae</taxon>
        <taxon>Xenopodinae</taxon>
        <taxon>Xenopus</taxon>
        <taxon>Xenopus</taxon>
    </lineage>
</organism>
<gene>
    <name type="primary">sde2</name>
</gene>
<evidence type="ECO:0000250" key="1">
    <source>
        <dbReference type="UniProtKB" id="O14113"/>
    </source>
</evidence>
<evidence type="ECO:0000250" key="2">
    <source>
        <dbReference type="UniProtKB" id="Q6IQ49"/>
    </source>
</evidence>
<evidence type="ECO:0000255" key="3"/>
<evidence type="ECO:0000256" key="4">
    <source>
        <dbReference type="SAM" id="MobiDB-lite"/>
    </source>
</evidence>
<evidence type="ECO:0000305" key="5"/>
<accession>Q6NRI5</accession>
<reference key="1">
    <citation type="submission" date="2004-05" db="EMBL/GenBank/DDBJ databases">
        <authorList>
            <consortium name="NIH - Xenopus Gene Collection (XGC) project"/>
        </authorList>
    </citation>
    <scope>NUCLEOTIDE SEQUENCE [LARGE SCALE MRNA]</scope>
    <source>
        <tissue>Oocyte</tissue>
    </source>
</reference>
<keyword id="KW-0131">Cell cycle</keyword>
<keyword id="KW-0132">Cell division</keyword>
<keyword id="KW-0175">Coiled coil</keyword>
<keyword id="KW-0963">Cytoplasm</keyword>
<keyword id="KW-0235">DNA replication</keyword>
<keyword id="KW-0238">DNA-binding</keyword>
<keyword id="KW-0498">Mitosis</keyword>
<keyword id="KW-0507">mRNA processing</keyword>
<keyword id="KW-0508">mRNA splicing</keyword>
<keyword id="KW-0539">Nucleus</keyword>
<keyword id="KW-1185">Reference proteome</keyword>
<keyword id="KW-0690">Ribosome biogenesis</keyword>
<keyword id="KW-0694">RNA-binding</keyword>
<comment type="function">
    <text evidence="2">Inhibits translesion DNA synthesis by preventing monoubiquitination of PCNA, this is necessary to counteract damage due to ultraviolet light-induced replication stress (By similarity). SDE2 is cleaved following PCNA binding, and its complete degradation is necessary to allow S-phase progression following DNA damage (By similarity).</text>
</comment>
<comment type="function">
    <text evidence="1 2">Plays a role in pre-mRNA splicing by facilitating excision of relatively short introns featuring weak 3'-splice sites (ss) and high GC content (By similarity). May recruit CACTIN to the spliceosome (By similarity).</text>
</comment>
<comment type="function">
    <text evidence="2">Plays a role in ribosome biogenesis by enabling SNORD3- and SNORD118-dependent cleavage of the 47S rRNA precursor (By similarity). Binds ncRNA (non-coding RNA) including the snoRNAs SNORD3 and SNORD118 (By similarity).</text>
</comment>
<comment type="subcellular location">
    <subcellularLocation>
        <location evidence="2">Nucleus</location>
    </subcellularLocation>
    <subcellularLocation>
        <location evidence="2">Cytoplasm</location>
    </subcellularLocation>
</comment>
<comment type="domain">
    <text evidence="2">The PIP-box (PCNA interacting peptide) motif mediates both the interaction with PCNA and cleavage of the SDE2 precursor by a deubiquitinating enzyme.</text>
</comment>
<comment type="domain">
    <text evidence="2">The SAP domain is necessary for specific binding to DNA.</text>
</comment>
<comment type="domain">
    <text evidence="2">The propeptide displays a ubiquitin-like fold.</text>
</comment>
<comment type="PTM">
    <text evidence="2">Upon binding to PCNA, the N-terminal UBL (ubiquitin-like) propeptide is cleaved at Gly-71 by an unidentified deubiquitinating enzyme; the resulting mature SDE2 is degraded by the DCX(DTL) complex in a cell cycle- and DNA damage dependent manner.</text>
</comment>
<comment type="similarity">
    <text evidence="5">Belongs to the SDE2 family.</text>
</comment>
<name>SDE2_XENLA</name>
<dbReference type="EMBL" id="BC070765">
    <property type="protein sequence ID" value="AAH70765.1"/>
    <property type="molecule type" value="mRNA"/>
</dbReference>
<dbReference type="RefSeq" id="NP_001084858.1">
    <property type="nucleotide sequence ID" value="NM_001091389.1"/>
</dbReference>
<dbReference type="SMR" id="Q6NRI5"/>
<dbReference type="BioGRID" id="101272">
    <property type="interactions" value="1"/>
</dbReference>
<dbReference type="IntAct" id="Q6NRI5">
    <property type="interactions" value="1"/>
</dbReference>
<dbReference type="DNASU" id="431906"/>
<dbReference type="GeneID" id="431906"/>
<dbReference type="KEGG" id="xla:431906"/>
<dbReference type="AGR" id="Xenbase:XB-GENE-6079013"/>
<dbReference type="CTD" id="431906"/>
<dbReference type="Xenbase" id="XB-GENE-6079013">
    <property type="gene designation" value="sde2.S"/>
</dbReference>
<dbReference type="OrthoDB" id="547031at2759"/>
<dbReference type="Proteomes" id="UP000186698">
    <property type="component" value="Chromosome 5S"/>
</dbReference>
<dbReference type="Bgee" id="431906">
    <property type="expression patterns" value="Expressed in egg cell and 19 other cell types or tissues"/>
</dbReference>
<dbReference type="GO" id="GO:0005737">
    <property type="term" value="C:cytoplasm"/>
    <property type="evidence" value="ECO:0000250"/>
    <property type="project" value="UniProtKB"/>
</dbReference>
<dbReference type="GO" id="GO:0005634">
    <property type="term" value="C:nucleus"/>
    <property type="evidence" value="ECO:0000250"/>
    <property type="project" value="UniProtKB"/>
</dbReference>
<dbReference type="GO" id="GO:0003677">
    <property type="term" value="F:DNA binding"/>
    <property type="evidence" value="ECO:0007669"/>
    <property type="project" value="UniProtKB-KW"/>
</dbReference>
<dbReference type="GO" id="GO:0030515">
    <property type="term" value="F:snoRNA binding"/>
    <property type="evidence" value="ECO:0000250"/>
    <property type="project" value="UniProtKB"/>
</dbReference>
<dbReference type="GO" id="GO:0051301">
    <property type="term" value="P:cell division"/>
    <property type="evidence" value="ECO:0007669"/>
    <property type="project" value="UniProtKB-KW"/>
</dbReference>
<dbReference type="GO" id="GO:0006260">
    <property type="term" value="P:DNA replication"/>
    <property type="evidence" value="ECO:0007669"/>
    <property type="project" value="UniProtKB-KW"/>
</dbReference>
<dbReference type="GO" id="GO:0000479">
    <property type="term" value="P:endonucleolytic cleavage of tricistronic rRNA transcript (SSU-rRNA, 5.8S rRNA, LSU-rRNA)"/>
    <property type="evidence" value="ECO:0000250"/>
    <property type="project" value="UniProtKB"/>
</dbReference>
<dbReference type="GO" id="GO:0045292">
    <property type="term" value="P:mRNA cis splicing, via spliceosome"/>
    <property type="evidence" value="ECO:0000250"/>
    <property type="project" value="UniProtKB"/>
</dbReference>
<dbReference type="InterPro" id="IPR051421">
    <property type="entry name" value="RNA_Proc_DNA_Dmg_Regulator"/>
</dbReference>
<dbReference type="InterPro" id="IPR053822">
    <property type="entry name" value="SDE2-like_dom"/>
</dbReference>
<dbReference type="InterPro" id="IPR025086">
    <property type="entry name" value="SDE2/SF3A3_SAP"/>
</dbReference>
<dbReference type="InterPro" id="IPR053821">
    <property type="entry name" value="Sde2_Ubi"/>
</dbReference>
<dbReference type="PANTHER" id="PTHR12786">
    <property type="entry name" value="SPLICING FACTOR SF3A-RELATED"/>
    <property type="match status" value="1"/>
</dbReference>
<dbReference type="PANTHER" id="PTHR12786:SF1">
    <property type="entry name" value="SPLICING REGULATOR SDE2"/>
    <property type="match status" value="1"/>
</dbReference>
<dbReference type="Pfam" id="PF22782">
    <property type="entry name" value="SDE2"/>
    <property type="match status" value="1"/>
</dbReference>
<dbReference type="Pfam" id="PF13297">
    <property type="entry name" value="SDE2_2C"/>
    <property type="match status" value="1"/>
</dbReference>
<dbReference type="Pfam" id="PF22781">
    <property type="entry name" value="Sde2_N_Ubi_vert"/>
    <property type="match status" value="1"/>
</dbReference>
<feature type="propeptide" id="PRO_0000442526" description="UBL" evidence="2">
    <location>
        <begin position="1"/>
        <end position="71"/>
    </location>
</feature>
<feature type="chain" id="PRO_0000286089" description="Splicing regulator SDE2">
    <location>
        <begin position="72"/>
        <end position="454"/>
    </location>
</feature>
<feature type="domain" description="SAP" evidence="3">
    <location>
        <begin position="399"/>
        <end position="433"/>
    </location>
</feature>
<feature type="region of interest" description="Disordered" evidence="4">
    <location>
        <begin position="170"/>
        <end position="193"/>
    </location>
</feature>
<feature type="region of interest" description="Disordered" evidence="4">
    <location>
        <begin position="212"/>
        <end position="386"/>
    </location>
</feature>
<feature type="coiled-coil region" evidence="3">
    <location>
        <begin position="109"/>
        <end position="143"/>
    </location>
</feature>
<feature type="short sequence motif" description="PIP-box" evidence="2">
    <location>
        <begin position="33"/>
        <end position="46"/>
    </location>
</feature>
<feature type="compositionally biased region" description="Basic and acidic residues" evidence="4">
    <location>
        <begin position="237"/>
        <end position="247"/>
    </location>
</feature>
<feature type="compositionally biased region" description="Low complexity" evidence="4">
    <location>
        <begin position="248"/>
        <end position="266"/>
    </location>
</feature>
<feature type="compositionally biased region" description="Polar residues" evidence="4">
    <location>
        <begin position="271"/>
        <end position="303"/>
    </location>
</feature>
<feature type="compositionally biased region" description="Polar residues" evidence="4">
    <location>
        <begin position="318"/>
        <end position="357"/>
    </location>
</feature>
<feature type="compositionally biased region" description="Polar residues" evidence="4">
    <location>
        <begin position="376"/>
        <end position="386"/>
    </location>
</feature>
<feature type="site" description="Cleavage" evidence="2">
    <location>
        <begin position="71"/>
        <end position="72"/>
    </location>
</feature>